<sequence>MKSFLLIALVLFFLFVSYASAKNKCQLPSDVGKGKASFTRYYYNEEGGKCETFIYGGVGGNSNNFLTKEDCCRECAQGSC</sequence>
<keyword id="KW-1015">Disulfide bond</keyword>
<keyword id="KW-0646">Protease inhibitor</keyword>
<keyword id="KW-0964">Secreted</keyword>
<keyword id="KW-0722">Serine protease inhibitor</keyword>
<keyword id="KW-0732">Signal</keyword>
<feature type="signal peptide" evidence="1">
    <location>
        <begin position="1"/>
        <end position="21"/>
    </location>
</feature>
<feature type="chain" id="PRO_0000403912" description="Kunitz-type serine protease inhibitor LmKTT-1b">
    <location>
        <begin position="22"/>
        <end position="80"/>
    </location>
</feature>
<feature type="domain" description="BPTI/Kunitz inhibitor" evidence="2">
    <location>
        <begin position="25"/>
        <end position="75"/>
    </location>
</feature>
<feature type="site" description="Key residue that directly interacts with the S1 pocket of trypsin">
    <location>
        <position position="35"/>
    </location>
</feature>
<feature type="disulfide bond" evidence="2">
    <location>
        <begin position="25"/>
        <end position="75"/>
    </location>
</feature>
<feature type="disulfide bond" evidence="2">
    <location>
        <begin position="50"/>
        <end position="71"/>
    </location>
</feature>
<feature type="disulfide bond" evidence="2">
    <location>
        <begin position="72"/>
        <end position="80"/>
    </location>
</feature>
<feature type="mutagenesis site" description="1.8-fold decrease in trypsin inhibitory activity." evidence="3">
    <original>K</original>
    <variation>A</variation>
    <location>
        <position position="33"/>
    </location>
</feature>
<feature type="mutagenesis site" description="1.6-fold decrease in trypsin inhibitory activity." evidence="3">
    <original>G</original>
    <variation>F</variation>
    <location>
        <position position="34"/>
    </location>
</feature>
<feature type="mutagenesis site" description="Loss of trypsin inhibitory activity." evidence="3">
    <original>K</original>
    <variation>A</variation>
    <location>
        <position position="35"/>
    </location>
</feature>
<feature type="mutagenesis site" description="400-fold decrease in trypsin inhibitory activity." evidence="3">
    <original>A</original>
    <variation>F</variation>
    <location>
        <position position="36"/>
    </location>
</feature>
<name>VKT22_LYCMC</name>
<comment type="function">
    <text evidence="3 4">Serine protease inhibitor that inhibits trypsin at a molar ratio of 1:1 (Ki=160 nM). Is thermostable.</text>
</comment>
<comment type="subcellular location">
    <subcellularLocation>
        <location evidence="9 10">Secreted</location>
    </subcellularLocation>
</comment>
<comment type="tissue specificity">
    <text evidence="8">Expressed by the venom gland.</text>
</comment>
<comment type="miscellaneous">
    <text evidence="3 4">Negative results: has no effect on chymotrypsin and elastase (PubMed:22087336, PubMed:22354971). Shows weak inhibitory activity on mKv1.3/KCNA3 potassium channel currents (1 uM inhibits 50% of currents) (PubMed:22354971).</text>
</comment>
<comment type="similarity">
    <text evidence="7">Belongs to the venom Kunitz-type family. Scorpion delta-Ktx subfamily. Delta-Ktx 2 sub-subfamily.</text>
</comment>
<protein>
    <recommendedName>
        <fullName evidence="6">Kunitz-type serine protease inhibitor LmKTT-1b</fullName>
    </recommendedName>
    <alternativeName>
        <fullName>Delta-KTx 2.2</fullName>
    </alternativeName>
    <alternativeName>
        <fullName evidence="5">SdPI</fullName>
    </alternativeName>
</protein>
<reference evidence="11" key="1">
    <citation type="journal article" date="2010" name="BMC Genomics">
        <title>Comparative venom gland transcriptome analysis of the scorpion Lychas mucronatus reveals intraspecific toxic gene diversity and new venomous components.</title>
        <authorList>
            <person name="Zhao R."/>
            <person name="Ma Y."/>
            <person name="He Y."/>
            <person name="Di Z."/>
            <person name="Wu Y.-L."/>
            <person name="Cao Z.-J."/>
            <person name="Li W.-X."/>
        </authorList>
    </citation>
    <scope>NUCLEOTIDE SEQUENCE [MRNA]</scope>
    <source>
        <strain>Yunnan</strain>
        <tissue>Venom gland</tissue>
    </source>
</reference>
<reference key="2">
    <citation type="journal article" date="2011" name="PLoS ONE">
        <title>SdPI, the first functionally characterized Kunitz-type trypsin inhibitor from scorpion venom.</title>
        <authorList>
            <person name="Zhao R.M."/>
            <person name="Dai H."/>
            <person name="Qiu S."/>
            <person name="Li T."/>
            <person name="He Y."/>
            <person name="Ma Y."/>
            <person name="Chen Z.-Y."/>
            <person name="Wu Y.-L."/>
            <person name="Li W.-X."/>
            <person name="Cao Z.-J."/>
        </authorList>
    </citation>
    <scope>FUNCTION</scope>
    <scope>MUTAGENESIS OF LYS-33; GLY-34; LYS-35 AND ALA-36</scope>
    <scope>3D-STRUCTURE MODELING</scope>
    <scope>RECOMBINANT EXPRESSION</scope>
</reference>
<reference key="3">
    <citation type="journal article" date="2012" name="J. Biol. Chem.">
        <title>Hg1, novel peptide inhibitor specific for Kv1.3 channels from first scorpion Kunitz-type potassium channel toxin family.</title>
        <authorList>
            <person name="Chen Z.-Y."/>
            <person name="Hu Y.T."/>
            <person name="Yang W.S."/>
            <person name="He Y.W."/>
            <person name="Feng J."/>
            <person name="Wang B."/>
            <person name="Zhao R.M."/>
            <person name="Ding J.P."/>
            <person name="Cao Z.-J."/>
            <person name="Li W.-X."/>
            <person name="Wu Y.-L."/>
        </authorList>
    </citation>
    <scope>FUNCTION</scope>
    <scope>RECOMBINANT EXPRESSION</scope>
</reference>
<evidence type="ECO:0000255" key="1"/>
<evidence type="ECO:0000255" key="2">
    <source>
        <dbReference type="PROSITE-ProRule" id="PRU00031"/>
    </source>
</evidence>
<evidence type="ECO:0000269" key="3">
    <source>
    </source>
</evidence>
<evidence type="ECO:0000269" key="4">
    <source>
    </source>
</evidence>
<evidence type="ECO:0000303" key="5">
    <source>
    </source>
</evidence>
<evidence type="ECO:0000303" key="6">
    <source>
    </source>
</evidence>
<evidence type="ECO:0000305" key="7"/>
<evidence type="ECO:0000305" key="8">
    <source>
    </source>
</evidence>
<evidence type="ECO:0000305" key="9">
    <source>
    </source>
</evidence>
<evidence type="ECO:0000305" key="10">
    <source>
    </source>
</evidence>
<evidence type="ECO:0000312" key="11">
    <source>
        <dbReference type="EMBL" id="GT028613"/>
    </source>
</evidence>
<organism>
    <name type="scientific">Lychas mucronatus</name>
    <name type="common">Chinese swimming scorpion</name>
    <dbReference type="NCBI Taxonomy" id="172552"/>
    <lineage>
        <taxon>Eukaryota</taxon>
        <taxon>Metazoa</taxon>
        <taxon>Ecdysozoa</taxon>
        <taxon>Arthropoda</taxon>
        <taxon>Chelicerata</taxon>
        <taxon>Arachnida</taxon>
        <taxon>Scorpiones</taxon>
        <taxon>Buthida</taxon>
        <taxon>Buthoidea</taxon>
        <taxon>Buthidae</taxon>
        <taxon>Lychas</taxon>
    </lineage>
</organism>
<accession>P0DJ45</accession>
<accession>P0CJ20</accession>
<dbReference type="EMBL" id="GT028613">
    <property type="status" value="NOT_ANNOTATED_CDS"/>
    <property type="molecule type" value="mRNA"/>
</dbReference>
<dbReference type="SMR" id="P0DJ45"/>
<dbReference type="GO" id="GO:0005576">
    <property type="term" value="C:extracellular region"/>
    <property type="evidence" value="ECO:0000303"/>
    <property type="project" value="UniProtKB"/>
</dbReference>
<dbReference type="GO" id="GO:0005615">
    <property type="term" value="C:extracellular space"/>
    <property type="evidence" value="ECO:0007669"/>
    <property type="project" value="TreeGrafter"/>
</dbReference>
<dbReference type="GO" id="GO:0033644">
    <property type="term" value="C:host cell membrane"/>
    <property type="evidence" value="ECO:0000303"/>
    <property type="project" value="UniProtKB"/>
</dbReference>
<dbReference type="GO" id="GO:0015459">
    <property type="term" value="F:potassium channel regulator activity"/>
    <property type="evidence" value="ECO:0007669"/>
    <property type="project" value="UniProtKB-KW"/>
</dbReference>
<dbReference type="GO" id="GO:0004867">
    <property type="term" value="F:serine-type endopeptidase inhibitor activity"/>
    <property type="evidence" value="ECO:0000314"/>
    <property type="project" value="UniProtKB"/>
</dbReference>
<dbReference type="GO" id="GO:0090729">
    <property type="term" value="F:toxin activity"/>
    <property type="evidence" value="ECO:0007669"/>
    <property type="project" value="UniProtKB-KW"/>
</dbReference>
<dbReference type="GO" id="GO:0044562">
    <property type="term" value="P:envenomation resulting in negative regulation of voltage-gated potassium channel activity in another organism"/>
    <property type="evidence" value="ECO:0000314"/>
    <property type="project" value="UniProtKB"/>
</dbReference>
<dbReference type="CDD" id="cd22620">
    <property type="entry name" value="Kunitz_KTT"/>
    <property type="match status" value="1"/>
</dbReference>
<dbReference type="Gene3D" id="4.10.410.10">
    <property type="entry name" value="Pancreatic trypsin inhibitor Kunitz domain"/>
    <property type="match status" value="1"/>
</dbReference>
<dbReference type="InterPro" id="IPR002223">
    <property type="entry name" value="Kunitz_BPTI"/>
</dbReference>
<dbReference type="InterPro" id="IPR036880">
    <property type="entry name" value="Kunitz_BPTI_sf"/>
</dbReference>
<dbReference type="InterPro" id="IPR050098">
    <property type="entry name" value="TFPI/VKTCI-like"/>
</dbReference>
<dbReference type="PANTHER" id="PTHR10083:SF374">
    <property type="entry name" value="BPTI_KUNITZ INHIBITOR DOMAIN-CONTAINING PROTEIN"/>
    <property type="match status" value="1"/>
</dbReference>
<dbReference type="PANTHER" id="PTHR10083">
    <property type="entry name" value="KUNITZ-TYPE PROTEASE INHIBITOR-RELATED"/>
    <property type="match status" value="1"/>
</dbReference>
<dbReference type="Pfam" id="PF00014">
    <property type="entry name" value="Kunitz_BPTI"/>
    <property type="match status" value="1"/>
</dbReference>
<dbReference type="PRINTS" id="PR00759">
    <property type="entry name" value="BASICPTASE"/>
</dbReference>
<dbReference type="SMART" id="SM00131">
    <property type="entry name" value="KU"/>
    <property type="match status" value="1"/>
</dbReference>
<dbReference type="SUPFAM" id="SSF57362">
    <property type="entry name" value="BPTI-like"/>
    <property type="match status" value="1"/>
</dbReference>
<dbReference type="PROSITE" id="PS50279">
    <property type="entry name" value="BPTI_KUNITZ_2"/>
    <property type="match status" value="1"/>
</dbReference>
<proteinExistence type="evidence at transcript level"/>